<dbReference type="EMBL" id="Y10019">
    <property type="protein sequence ID" value="CAA71126.1"/>
    <property type="molecule type" value="mRNA"/>
</dbReference>
<dbReference type="RefSeq" id="NP_062155.1">
    <property type="nucleotide sequence ID" value="NM_019282.3"/>
</dbReference>
<dbReference type="SMR" id="O35793"/>
<dbReference type="BioGRID" id="248391">
    <property type="interactions" value="1"/>
</dbReference>
<dbReference type="FunCoup" id="O35793">
    <property type="interactions" value="187"/>
</dbReference>
<dbReference type="IntAct" id="O35793">
    <property type="interactions" value="1"/>
</dbReference>
<dbReference type="STRING" id="10116.ENSRNOP00000035888"/>
<dbReference type="GlyCosmos" id="O35793">
    <property type="glycosylation" value="2 sites, No reported glycans"/>
</dbReference>
<dbReference type="GlyGen" id="O35793">
    <property type="glycosylation" value="2 sites"/>
</dbReference>
<dbReference type="PhosphoSitePlus" id="O35793"/>
<dbReference type="PaxDb" id="10116-ENSRNOP00000035888"/>
<dbReference type="Ensembl" id="ENSRNOT00000037895.4">
    <property type="protein sequence ID" value="ENSRNOP00000035888.2"/>
    <property type="gene ID" value="ENSRNOG00000026053.4"/>
</dbReference>
<dbReference type="Ensembl" id="ENSRNOT00000104302.1">
    <property type="protein sequence ID" value="ENSRNOP00000084612.1"/>
    <property type="gene ID" value="ENSRNOG00000026053.4"/>
</dbReference>
<dbReference type="GeneID" id="50566"/>
<dbReference type="KEGG" id="rno:50566"/>
<dbReference type="UCSC" id="RGD:2359">
    <property type="organism name" value="rat"/>
</dbReference>
<dbReference type="AGR" id="RGD:2359"/>
<dbReference type="CTD" id="26585"/>
<dbReference type="RGD" id="2359">
    <property type="gene designation" value="Grem1"/>
</dbReference>
<dbReference type="eggNOG" id="ENOG502QQ5X">
    <property type="taxonomic scope" value="Eukaryota"/>
</dbReference>
<dbReference type="GeneTree" id="ENSGT00940000154209"/>
<dbReference type="HOGENOM" id="CLU_101024_0_0_1"/>
<dbReference type="InParanoid" id="O35793"/>
<dbReference type="OMA" id="PPDKDQY"/>
<dbReference type="OrthoDB" id="10061784at2759"/>
<dbReference type="PhylomeDB" id="O35793"/>
<dbReference type="TreeFam" id="TF106445"/>
<dbReference type="PRO" id="PR:O35793"/>
<dbReference type="Proteomes" id="UP000002494">
    <property type="component" value="Chromosome 3"/>
</dbReference>
<dbReference type="Bgee" id="ENSRNOG00000026053">
    <property type="expression patterns" value="Expressed in colon and 12 other cell types or tissues"/>
</dbReference>
<dbReference type="GO" id="GO:0009986">
    <property type="term" value="C:cell surface"/>
    <property type="evidence" value="ECO:0000314"/>
    <property type="project" value="RGD"/>
</dbReference>
<dbReference type="GO" id="GO:0005576">
    <property type="term" value="C:extracellular region"/>
    <property type="evidence" value="ECO:0000304"/>
    <property type="project" value="Reactome"/>
</dbReference>
<dbReference type="GO" id="GO:0005615">
    <property type="term" value="C:extracellular space"/>
    <property type="evidence" value="ECO:0000314"/>
    <property type="project" value="RGD"/>
</dbReference>
<dbReference type="GO" id="GO:0036122">
    <property type="term" value="F:BMP binding"/>
    <property type="evidence" value="ECO:0000250"/>
    <property type="project" value="UniProtKB"/>
</dbReference>
<dbReference type="GO" id="GO:0005125">
    <property type="term" value="F:cytokine activity"/>
    <property type="evidence" value="ECO:0007669"/>
    <property type="project" value="UniProtKB-KW"/>
</dbReference>
<dbReference type="GO" id="GO:0042803">
    <property type="term" value="F:protein homodimerization activity"/>
    <property type="evidence" value="ECO:0000266"/>
    <property type="project" value="RGD"/>
</dbReference>
<dbReference type="GO" id="GO:0048018">
    <property type="term" value="F:receptor ligand activity"/>
    <property type="evidence" value="ECO:0000266"/>
    <property type="project" value="RGD"/>
</dbReference>
<dbReference type="GO" id="GO:0030297">
    <property type="term" value="F:transmembrane receptor protein tyrosine kinase activator activity"/>
    <property type="evidence" value="ECO:0000266"/>
    <property type="project" value="RGD"/>
</dbReference>
<dbReference type="GO" id="GO:0043184">
    <property type="term" value="F:vascular endothelial growth factor receptor 2 binding"/>
    <property type="evidence" value="ECO:0000266"/>
    <property type="project" value="RGD"/>
</dbReference>
<dbReference type="GO" id="GO:0001525">
    <property type="term" value="P:angiogenesis"/>
    <property type="evidence" value="ECO:0000266"/>
    <property type="project" value="RGD"/>
</dbReference>
<dbReference type="GO" id="GO:0009887">
    <property type="term" value="P:animal organ morphogenesis"/>
    <property type="evidence" value="ECO:0000266"/>
    <property type="project" value="RGD"/>
</dbReference>
<dbReference type="GO" id="GO:0055007">
    <property type="term" value="P:cardiac muscle cell differentiation"/>
    <property type="evidence" value="ECO:0000266"/>
    <property type="project" value="RGD"/>
</dbReference>
<dbReference type="GO" id="GO:0060379">
    <property type="term" value="P:cardiac muscle cell myoblast differentiation"/>
    <property type="evidence" value="ECO:0000266"/>
    <property type="project" value="RGD"/>
</dbReference>
<dbReference type="GO" id="GO:0002042">
    <property type="term" value="P:cell migration involved in sprouting angiogenesis"/>
    <property type="evidence" value="ECO:0000266"/>
    <property type="project" value="RGD"/>
</dbReference>
<dbReference type="GO" id="GO:0000902">
    <property type="term" value="P:cell morphogenesis"/>
    <property type="evidence" value="ECO:0000266"/>
    <property type="project" value="RGD"/>
</dbReference>
<dbReference type="GO" id="GO:0007267">
    <property type="term" value="P:cell-cell signaling"/>
    <property type="evidence" value="ECO:0000266"/>
    <property type="project" value="RGD"/>
</dbReference>
<dbReference type="GO" id="GO:0030199">
    <property type="term" value="P:collagen fibril organization"/>
    <property type="evidence" value="ECO:0000266"/>
    <property type="project" value="RGD"/>
</dbReference>
<dbReference type="GO" id="GO:0048263">
    <property type="term" value="P:determination of dorsal identity"/>
    <property type="evidence" value="ECO:0000266"/>
    <property type="project" value="RGD"/>
</dbReference>
<dbReference type="GO" id="GO:0030326">
    <property type="term" value="P:embryonic limb morphogenesis"/>
    <property type="evidence" value="ECO:0000266"/>
    <property type="project" value="RGD"/>
</dbReference>
<dbReference type="GO" id="GO:0043542">
    <property type="term" value="P:endothelial cell migration"/>
    <property type="evidence" value="ECO:0000266"/>
    <property type="project" value="RGD"/>
</dbReference>
<dbReference type="GO" id="GO:0060173">
    <property type="term" value="P:limb development"/>
    <property type="evidence" value="ECO:0000266"/>
    <property type="project" value="RGD"/>
</dbReference>
<dbReference type="GO" id="GO:0003337">
    <property type="term" value="P:mesenchymal to epithelial transition involved in metanephros morphogenesis"/>
    <property type="evidence" value="ECO:0000266"/>
    <property type="project" value="RGD"/>
</dbReference>
<dbReference type="GO" id="GO:0043066">
    <property type="term" value="P:negative regulation of apoptotic process"/>
    <property type="evidence" value="ECO:0000266"/>
    <property type="project" value="RGD"/>
</dbReference>
<dbReference type="GO" id="GO:0030514">
    <property type="term" value="P:negative regulation of BMP signaling pathway"/>
    <property type="evidence" value="ECO:0000250"/>
    <property type="project" value="UniProtKB"/>
</dbReference>
<dbReference type="GO" id="GO:0030502">
    <property type="term" value="P:negative regulation of bone mineralization"/>
    <property type="evidence" value="ECO:0000266"/>
    <property type="project" value="RGD"/>
</dbReference>
<dbReference type="GO" id="GO:1900158">
    <property type="term" value="P:negative regulation of bone mineralization involved in bone maturation"/>
    <property type="evidence" value="ECO:0000266"/>
    <property type="project" value="RGD"/>
</dbReference>
<dbReference type="GO" id="GO:0046851">
    <property type="term" value="P:negative regulation of bone remodeling"/>
    <property type="evidence" value="ECO:0000266"/>
    <property type="project" value="RGD"/>
</dbReference>
<dbReference type="GO" id="GO:1900155">
    <property type="term" value="P:negative regulation of bone trabecula formation"/>
    <property type="evidence" value="ECO:0000266"/>
    <property type="project" value="RGD"/>
</dbReference>
<dbReference type="GO" id="GO:0090090">
    <property type="term" value="P:negative regulation of canonical Wnt signaling pathway"/>
    <property type="evidence" value="ECO:0000266"/>
    <property type="project" value="RGD"/>
</dbReference>
<dbReference type="GO" id="GO:0030308">
    <property type="term" value="P:negative regulation of cell growth"/>
    <property type="evidence" value="ECO:0000315"/>
    <property type="project" value="RGD"/>
</dbReference>
<dbReference type="GO" id="GO:0032331">
    <property type="term" value="P:negative regulation of chondrocyte differentiation"/>
    <property type="evidence" value="ECO:0000266"/>
    <property type="project" value="RGD"/>
</dbReference>
<dbReference type="GO" id="GO:0045892">
    <property type="term" value="P:negative regulation of DNA-templated transcription"/>
    <property type="evidence" value="ECO:0000266"/>
    <property type="project" value="RGD"/>
</dbReference>
<dbReference type="GO" id="GO:0002689">
    <property type="term" value="P:negative regulation of leukocyte chemotaxis"/>
    <property type="evidence" value="ECO:0000314"/>
    <property type="project" value="RGD"/>
</dbReference>
<dbReference type="GO" id="GO:0090027">
    <property type="term" value="P:negative regulation of monocyte chemotaxis"/>
    <property type="evidence" value="ECO:0000314"/>
    <property type="project" value="BHF-UCL"/>
</dbReference>
<dbReference type="GO" id="GO:0045668">
    <property type="term" value="P:negative regulation of osteoblast differentiation"/>
    <property type="evidence" value="ECO:0000315"/>
    <property type="project" value="ARUK-UCL"/>
</dbReference>
<dbReference type="GO" id="GO:0033689">
    <property type="term" value="P:negative regulation of osteoblast proliferation"/>
    <property type="evidence" value="ECO:0000266"/>
    <property type="project" value="RGD"/>
</dbReference>
<dbReference type="GO" id="GO:0090291">
    <property type="term" value="P:negative regulation of osteoclast proliferation"/>
    <property type="evidence" value="ECO:0000266"/>
    <property type="project" value="RGD"/>
</dbReference>
<dbReference type="GO" id="GO:0060392">
    <property type="term" value="P:negative regulation of SMAD protein signal transduction"/>
    <property type="evidence" value="ECO:0000266"/>
    <property type="project" value="RGD"/>
</dbReference>
<dbReference type="GO" id="GO:0045766">
    <property type="term" value="P:positive regulation of angiogenesis"/>
    <property type="evidence" value="ECO:0000315"/>
    <property type="project" value="BHF-UCL"/>
</dbReference>
<dbReference type="GO" id="GO:0090190">
    <property type="term" value="P:positive regulation of branching involved in ureteric bud morphogenesis"/>
    <property type="evidence" value="ECO:0000266"/>
    <property type="project" value="RGD"/>
</dbReference>
<dbReference type="GO" id="GO:0008284">
    <property type="term" value="P:positive regulation of cell population proliferation"/>
    <property type="evidence" value="ECO:0000266"/>
    <property type="project" value="RGD"/>
</dbReference>
<dbReference type="GO" id="GO:0045893">
    <property type="term" value="P:positive regulation of DNA-templated transcription"/>
    <property type="evidence" value="ECO:0000266"/>
    <property type="project" value="RGD"/>
</dbReference>
<dbReference type="GO" id="GO:1901224">
    <property type="term" value="P:positive regulation of non-canonical NF-kappaB signal transduction"/>
    <property type="evidence" value="ECO:0000266"/>
    <property type="project" value="RGD"/>
</dbReference>
<dbReference type="GO" id="GO:0002092">
    <property type="term" value="P:positive regulation of receptor internalization"/>
    <property type="evidence" value="ECO:0000266"/>
    <property type="project" value="RGD"/>
</dbReference>
<dbReference type="GO" id="GO:0045944">
    <property type="term" value="P:positive regulation of transcription by RNA polymerase II"/>
    <property type="evidence" value="ECO:0000266"/>
    <property type="project" value="RGD"/>
</dbReference>
<dbReference type="GO" id="GO:0009954">
    <property type="term" value="P:proximal/distal pattern formation"/>
    <property type="evidence" value="ECO:0000266"/>
    <property type="project" value="RGD"/>
</dbReference>
<dbReference type="GO" id="GO:0010717">
    <property type="term" value="P:regulation of epithelial to mesenchymal transition"/>
    <property type="evidence" value="ECO:0000266"/>
    <property type="project" value="RGD"/>
</dbReference>
<dbReference type="GO" id="GO:0051893">
    <property type="term" value="P:regulation of focal adhesion assembly"/>
    <property type="evidence" value="ECO:0000266"/>
    <property type="project" value="RGD"/>
</dbReference>
<dbReference type="GO" id="GO:0038098">
    <property type="term" value="P:sequestering of BMP from receptor via BMP binding"/>
    <property type="evidence" value="ECO:0000318"/>
    <property type="project" value="GO_Central"/>
</dbReference>
<dbReference type="GO" id="GO:0007165">
    <property type="term" value="P:signal transduction"/>
    <property type="evidence" value="ECO:0000266"/>
    <property type="project" value="RGD"/>
</dbReference>
<dbReference type="GO" id="GO:0060676">
    <property type="term" value="P:ureteric bud formation"/>
    <property type="evidence" value="ECO:0000266"/>
    <property type="project" value="RGD"/>
</dbReference>
<dbReference type="FunFam" id="2.10.90.10:FF:000013">
    <property type="entry name" value="Gremlin"/>
    <property type="match status" value="1"/>
</dbReference>
<dbReference type="Gene3D" id="2.10.90.10">
    <property type="entry name" value="Cystine-knot cytokines"/>
    <property type="match status" value="1"/>
</dbReference>
<dbReference type="InterPro" id="IPR006207">
    <property type="entry name" value="Cys_knot_C"/>
</dbReference>
<dbReference type="InterPro" id="IPR029034">
    <property type="entry name" value="Cystine-knot_cytokine"/>
</dbReference>
<dbReference type="InterPro" id="IPR004133">
    <property type="entry name" value="DAN"/>
</dbReference>
<dbReference type="InterPro" id="IPR017159">
    <property type="entry name" value="Gremlin-1/2"/>
</dbReference>
<dbReference type="PANTHER" id="PTHR15283">
    <property type="entry name" value="GREMLIN 1"/>
    <property type="match status" value="1"/>
</dbReference>
<dbReference type="PANTHER" id="PTHR15283:SF3">
    <property type="entry name" value="GREMLIN-1"/>
    <property type="match status" value="1"/>
</dbReference>
<dbReference type="Pfam" id="PF03045">
    <property type="entry name" value="DAN"/>
    <property type="match status" value="1"/>
</dbReference>
<dbReference type="PIRSF" id="PIRSF037254">
    <property type="entry name" value="Gremlin_precursor"/>
    <property type="match status" value="1"/>
</dbReference>
<dbReference type="SMART" id="SM00041">
    <property type="entry name" value="CT"/>
    <property type="match status" value="1"/>
</dbReference>
<evidence type="ECO:0000250" key="1"/>
<evidence type="ECO:0000250" key="2">
    <source>
        <dbReference type="UniProtKB" id="O60565"/>
    </source>
</evidence>
<evidence type="ECO:0000250" key="3">
    <source>
        <dbReference type="UniProtKB" id="O70326"/>
    </source>
</evidence>
<evidence type="ECO:0000255" key="4"/>
<evidence type="ECO:0000256" key="5">
    <source>
        <dbReference type="SAM" id="MobiDB-lite"/>
    </source>
</evidence>
<evidence type="ECO:0000269" key="6">
    <source>
    </source>
</evidence>
<evidence type="ECO:0000269" key="7">
    <source>
    </source>
</evidence>
<evidence type="ECO:0000305" key="8"/>
<name>GREM1_RAT</name>
<sequence length="184" mass="20680">MNRTAYTVGALLLLLGTLLPAAEGKKKGSQGAIPPPDKAQHNDSEQTQSPPQPGSRTRGRGQGRGTAMPGEEVLESSQEALHVTERKYLKRDWCKTQPLKQTIHEEGCNSRTIINRFCYGQCNSFYIPRHIRKEEGSFQSCSFCKPKKFTTMMVTLNCPELQPPTKKKRVTRVKQCRCISIDLD</sequence>
<protein>
    <recommendedName>
        <fullName>Gremlin-1</fullName>
    </recommendedName>
    <alternativeName>
        <fullName>Cysteine knot superfamily 1, BMP antagonist 1</fullName>
    </alternativeName>
    <alternativeName>
        <fullName>Down-regulated in Mos-transformed cells protein</fullName>
    </alternativeName>
</protein>
<gene>
    <name type="primary">Grem1</name>
    <name type="synonym">Cktsf1b1</name>
    <name type="synonym">Drm</name>
</gene>
<keyword id="KW-0202">Cytokine</keyword>
<keyword id="KW-1015">Disulfide bond</keyword>
<keyword id="KW-0325">Glycoprotein</keyword>
<keyword id="KW-1185">Reference proteome</keyword>
<keyword id="KW-0964">Secreted</keyword>
<keyword id="KW-0732">Signal</keyword>
<feature type="signal peptide" evidence="1">
    <location>
        <begin position="1"/>
        <end position="24"/>
    </location>
</feature>
<feature type="chain" id="PRO_0000006717" description="Gremlin-1">
    <location>
        <begin position="25"/>
        <end position="184"/>
    </location>
</feature>
<feature type="domain" description="CTCK">
    <location>
        <begin position="94"/>
        <end position="184"/>
    </location>
</feature>
<feature type="region of interest" description="Disordered" evidence="5">
    <location>
        <begin position="24"/>
        <end position="78"/>
    </location>
</feature>
<feature type="glycosylation site" description="N-linked (GlcNAc...) asparagine" evidence="4">
    <location>
        <position position="2"/>
    </location>
</feature>
<feature type="glycosylation site" description="N-linked (GlcNAc...) asparagine" evidence="4">
    <location>
        <position position="42"/>
    </location>
</feature>
<feature type="disulfide bond" evidence="2">
    <location>
        <begin position="94"/>
        <end position="144"/>
    </location>
</feature>
<feature type="disulfide bond" evidence="2">
    <location>
        <begin position="108"/>
        <end position="158"/>
    </location>
</feature>
<feature type="disulfide bond" evidence="2">
    <location>
        <begin position="118"/>
        <end position="176"/>
    </location>
</feature>
<feature type="disulfide bond" evidence="2">
    <location>
        <begin position="122"/>
        <end position="178"/>
    </location>
</feature>
<feature type="mutagenesis site" description="No interaction with SLIT1." evidence="6">
    <original>NDS</original>
    <variation>IEA</variation>
    <location>
        <begin position="42"/>
        <end position="44"/>
    </location>
</feature>
<comment type="function">
    <text evidence="2 3 6 7">Cytokine that may play an important role during carcinogenesis and metanephric kidney organogenesis, as a BMP antagonist required for early limb outgrowth and patterning in maintaining the FGF4-SHH feedback loop. Down-regulates the BMP4 signaling in a dose-dependent manner (By similarity). Antagonist of BMP2; inhibits BMP2-mediated differentiation of osteoblasts (in vitro) (By similarity). Acts as inhibitor of monocyte chemotaxis (PubMed:15528323). Can inhibit the growth or viability of normal cells but not transformed cells when is overexpressed.</text>
</comment>
<comment type="subunit">
    <text evidence="2 6">Homodimer; can also form homooligomers. Interacts with BMP2; can form higher oligomers with BMP2 (By similarity). Interacts with SLIT1 and SLIT2 in a glycosylation-dependent manner (PubMed:15528323).</text>
</comment>
<comment type="subcellular location">
    <subcellularLocation>
        <location evidence="8">Secreted</location>
    </subcellularLocation>
</comment>
<comment type="tissue specificity">
    <text evidence="7">Highly expressed in the brain, kidney, spleen, and testis and weakly expressed in the lung and liver. Predominantly expressed in differentiated cells as neurons in brain, type I cells in lung and globlet cells in intestine.</text>
</comment>
<comment type="induction">
    <text evidence="7">Down-regulated in cells transformed by oncogenes.</text>
</comment>
<comment type="similarity">
    <text evidence="8">Belongs to the DAN family.</text>
</comment>
<proteinExistence type="evidence at protein level"/>
<organism>
    <name type="scientific">Rattus norvegicus</name>
    <name type="common">Rat</name>
    <dbReference type="NCBI Taxonomy" id="10116"/>
    <lineage>
        <taxon>Eukaryota</taxon>
        <taxon>Metazoa</taxon>
        <taxon>Chordata</taxon>
        <taxon>Craniata</taxon>
        <taxon>Vertebrata</taxon>
        <taxon>Euteleostomi</taxon>
        <taxon>Mammalia</taxon>
        <taxon>Eutheria</taxon>
        <taxon>Euarchontoglires</taxon>
        <taxon>Glires</taxon>
        <taxon>Rodentia</taxon>
        <taxon>Myomorpha</taxon>
        <taxon>Muroidea</taxon>
        <taxon>Muridae</taxon>
        <taxon>Murinae</taxon>
        <taxon>Rattus</taxon>
    </lineage>
</organism>
<accession>O35793</accession>
<reference key="1">
    <citation type="journal article" date="1997" name="Mol. Cell. Biol.">
        <title>Identification of drm, a novel gene whose expression is suppressed in transformed cells and which can inhibit growth of normal but not transformed cells in culture.</title>
        <authorList>
            <person name="Topol L.Z."/>
            <person name="Marx M."/>
            <person name="Laugier D."/>
            <person name="Bogdanova N.N."/>
            <person name="Boubnov N.V."/>
            <person name="Clausen P.A."/>
            <person name="Calothy G."/>
            <person name="Blair D.G."/>
        </authorList>
    </citation>
    <scope>NUCLEOTIDE SEQUENCE [MRNA]</scope>
    <scope>FUNCTION</scope>
    <scope>TISSUE SPECIFICITY</scope>
    <scope>INDUCTION</scope>
</reference>
<reference key="2">
    <citation type="journal article" date="2004" name="J. Immunol.">
        <title>Bone morphogenetic protein antagonists Drm/Gremlin and Dan interact with Slits and act as negative regulators of monocyte chemotaxis.</title>
        <authorList>
            <person name="Chen B."/>
            <person name="Blair D.G."/>
            <person name="Plisov S."/>
            <person name="Vasiliev G."/>
            <person name="Perantoni A.O."/>
            <person name="Chen Q."/>
            <person name="Athanasiou M."/>
            <person name="Wu J.Y."/>
            <person name="Oppenheim J.J."/>
            <person name="Yang D."/>
        </authorList>
    </citation>
    <scope>INTERACTION WITH SLIT1 AND SLIT2</scope>
    <scope>FUNCTION</scope>
    <scope>MUTAGENESIS OF 42-ASN--SER-44</scope>
</reference>